<reference key="1">
    <citation type="journal article" date="2007" name="Proc. Natl. Acad. Sci. U.S.A.">
        <title>Deep-sea vent epsilon-proteobacterial genomes provide insights into emergence of pathogens.</title>
        <authorList>
            <person name="Nakagawa S."/>
            <person name="Takaki Y."/>
            <person name="Shimamura S."/>
            <person name="Reysenbach A.-L."/>
            <person name="Takai K."/>
            <person name="Horikoshi K."/>
        </authorList>
    </citation>
    <scope>NUCLEOTIDE SEQUENCE [LARGE SCALE GENOMIC DNA]</scope>
    <source>
        <strain>NBC37-1</strain>
    </source>
</reference>
<comment type="function">
    <text evidence="1">Binds 23S rRNA and is also seen to make contacts with the A and possibly P site tRNAs.</text>
</comment>
<comment type="subunit">
    <text evidence="1">Part of the 50S ribosomal subunit.</text>
</comment>
<comment type="similarity">
    <text evidence="1">Belongs to the universal ribosomal protein uL16 family.</text>
</comment>
<feature type="chain" id="PRO_1000054720" description="Large ribosomal subunit protein uL16">
    <location>
        <begin position="1"/>
        <end position="141"/>
    </location>
</feature>
<feature type="region of interest" description="Disordered" evidence="2">
    <location>
        <begin position="1"/>
        <end position="23"/>
    </location>
</feature>
<organism>
    <name type="scientific">Sulfurovum sp. (strain NBC37-1)</name>
    <dbReference type="NCBI Taxonomy" id="387093"/>
    <lineage>
        <taxon>Bacteria</taxon>
        <taxon>Pseudomonadati</taxon>
        <taxon>Campylobacterota</taxon>
        <taxon>Epsilonproteobacteria</taxon>
        <taxon>Campylobacterales</taxon>
        <taxon>Sulfurovaceae</taxon>
        <taxon>Sulfurovum</taxon>
    </lineage>
</organism>
<keyword id="KW-0687">Ribonucleoprotein</keyword>
<keyword id="KW-0689">Ribosomal protein</keyword>
<keyword id="KW-0694">RNA-binding</keyword>
<keyword id="KW-0699">rRNA-binding</keyword>
<keyword id="KW-0820">tRNA-binding</keyword>
<evidence type="ECO:0000255" key="1">
    <source>
        <dbReference type="HAMAP-Rule" id="MF_01342"/>
    </source>
</evidence>
<evidence type="ECO:0000256" key="2">
    <source>
        <dbReference type="SAM" id="MobiDB-lite"/>
    </source>
</evidence>
<evidence type="ECO:0000305" key="3"/>
<gene>
    <name evidence="1" type="primary">rplP</name>
    <name type="ordered locus">SUN_2328</name>
</gene>
<protein>
    <recommendedName>
        <fullName evidence="1">Large ribosomal subunit protein uL16</fullName>
    </recommendedName>
    <alternativeName>
        <fullName evidence="3">50S ribosomal protein L16</fullName>
    </alternativeName>
</protein>
<dbReference type="EMBL" id="AP009179">
    <property type="protein sequence ID" value="BAF73264.1"/>
    <property type="molecule type" value="Genomic_DNA"/>
</dbReference>
<dbReference type="RefSeq" id="WP_012084103.1">
    <property type="nucleotide sequence ID" value="NC_009663.1"/>
</dbReference>
<dbReference type="SMR" id="A6QCQ5"/>
<dbReference type="STRING" id="387093.SUN_2328"/>
<dbReference type="KEGG" id="sun:SUN_2328"/>
<dbReference type="eggNOG" id="COG0197">
    <property type="taxonomic scope" value="Bacteria"/>
</dbReference>
<dbReference type="HOGENOM" id="CLU_078858_2_1_7"/>
<dbReference type="OrthoDB" id="9802589at2"/>
<dbReference type="Proteomes" id="UP000006378">
    <property type="component" value="Chromosome"/>
</dbReference>
<dbReference type="GO" id="GO:0022625">
    <property type="term" value="C:cytosolic large ribosomal subunit"/>
    <property type="evidence" value="ECO:0007669"/>
    <property type="project" value="TreeGrafter"/>
</dbReference>
<dbReference type="GO" id="GO:0019843">
    <property type="term" value="F:rRNA binding"/>
    <property type="evidence" value="ECO:0007669"/>
    <property type="project" value="UniProtKB-UniRule"/>
</dbReference>
<dbReference type="GO" id="GO:0003735">
    <property type="term" value="F:structural constituent of ribosome"/>
    <property type="evidence" value="ECO:0007669"/>
    <property type="project" value="InterPro"/>
</dbReference>
<dbReference type="GO" id="GO:0000049">
    <property type="term" value="F:tRNA binding"/>
    <property type="evidence" value="ECO:0007669"/>
    <property type="project" value="UniProtKB-KW"/>
</dbReference>
<dbReference type="GO" id="GO:0006412">
    <property type="term" value="P:translation"/>
    <property type="evidence" value="ECO:0007669"/>
    <property type="project" value="UniProtKB-UniRule"/>
</dbReference>
<dbReference type="CDD" id="cd01433">
    <property type="entry name" value="Ribosomal_L16_L10e"/>
    <property type="match status" value="1"/>
</dbReference>
<dbReference type="FunFam" id="3.90.1170.10:FF:000001">
    <property type="entry name" value="50S ribosomal protein L16"/>
    <property type="match status" value="1"/>
</dbReference>
<dbReference type="Gene3D" id="3.90.1170.10">
    <property type="entry name" value="Ribosomal protein L10e/L16"/>
    <property type="match status" value="1"/>
</dbReference>
<dbReference type="HAMAP" id="MF_01342">
    <property type="entry name" value="Ribosomal_uL16"/>
    <property type="match status" value="1"/>
</dbReference>
<dbReference type="InterPro" id="IPR047873">
    <property type="entry name" value="Ribosomal_uL16"/>
</dbReference>
<dbReference type="InterPro" id="IPR000114">
    <property type="entry name" value="Ribosomal_uL16_bact-type"/>
</dbReference>
<dbReference type="InterPro" id="IPR020798">
    <property type="entry name" value="Ribosomal_uL16_CS"/>
</dbReference>
<dbReference type="InterPro" id="IPR016180">
    <property type="entry name" value="Ribosomal_uL16_dom"/>
</dbReference>
<dbReference type="InterPro" id="IPR036920">
    <property type="entry name" value="Ribosomal_uL16_sf"/>
</dbReference>
<dbReference type="NCBIfam" id="TIGR01164">
    <property type="entry name" value="rplP_bact"/>
    <property type="match status" value="1"/>
</dbReference>
<dbReference type="PANTHER" id="PTHR12220">
    <property type="entry name" value="50S/60S RIBOSOMAL PROTEIN L16"/>
    <property type="match status" value="1"/>
</dbReference>
<dbReference type="PANTHER" id="PTHR12220:SF13">
    <property type="entry name" value="LARGE RIBOSOMAL SUBUNIT PROTEIN UL16M"/>
    <property type="match status" value="1"/>
</dbReference>
<dbReference type="Pfam" id="PF00252">
    <property type="entry name" value="Ribosomal_L16"/>
    <property type="match status" value="1"/>
</dbReference>
<dbReference type="PRINTS" id="PR00060">
    <property type="entry name" value="RIBOSOMALL16"/>
</dbReference>
<dbReference type="SUPFAM" id="SSF54686">
    <property type="entry name" value="Ribosomal protein L16p/L10e"/>
    <property type="match status" value="1"/>
</dbReference>
<dbReference type="PROSITE" id="PS00701">
    <property type="entry name" value="RIBOSOMAL_L16_2"/>
    <property type="match status" value="1"/>
</dbReference>
<sequence>MLMPKRTKWRKQQKGRNRGKSFRGNKIEFGDIAIKAVEAGRIDSRQIEAARITMTRKINRTGKTWIRVFPDKPLTAKPLETRMGKGKGAVDRWVMNIKPGRIIFEMAGVEEELARAALTLAIHKMPFKCKIITAKDSHELY</sequence>
<proteinExistence type="inferred from homology"/>
<accession>A6QCQ5</accession>
<name>RL16_SULNB</name>